<organism>
    <name type="scientific">Maricaulis maris (strain MCS10)</name>
    <name type="common">Caulobacter maris</name>
    <dbReference type="NCBI Taxonomy" id="394221"/>
    <lineage>
        <taxon>Bacteria</taxon>
        <taxon>Pseudomonadati</taxon>
        <taxon>Pseudomonadota</taxon>
        <taxon>Alphaproteobacteria</taxon>
        <taxon>Maricaulales</taxon>
        <taxon>Maricaulaceae</taxon>
        <taxon>Maricaulis</taxon>
    </lineage>
</organism>
<reference key="1">
    <citation type="submission" date="2006-08" db="EMBL/GenBank/DDBJ databases">
        <title>Complete sequence of Maricaulis maris MCS10.</title>
        <authorList>
            <consortium name="US DOE Joint Genome Institute"/>
            <person name="Copeland A."/>
            <person name="Lucas S."/>
            <person name="Lapidus A."/>
            <person name="Barry K."/>
            <person name="Detter J.C."/>
            <person name="Glavina del Rio T."/>
            <person name="Hammon N."/>
            <person name="Israni S."/>
            <person name="Dalin E."/>
            <person name="Tice H."/>
            <person name="Pitluck S."/>
            <person name="Saunders E."/>
            <person name="Brettin T."/>
            <person name="Bruce D."/>
            <person name="Han C."/>
            <person name="Tapia R."/>
            <person name="Gilna P."/>
            <person name="Schmutz J."/>
            <person name="Larimer F."/>
            <person name="Land M."/>
            <person name="Hauser L."/>
            <person name="Kyrpides N."/>
            <person name="Mikhailova N."/>
            <person name="Viollier P."/>
            <person name="Stephens C."/>
            <person name="Richardson P."/>
        </authorList>
    </citation>
    <scope>NUCLEOTIDE SEQUENCE [LARGE SCALE GENOMIC DNA]</scope>
    <source>
        <strain>MCS10</strain>
    </source>
</reference>
<keyword id="KW-1185">Reference proteome</keyword>
<keyword id="KW-0687">Ribonucleoprotein</keyword>
<keyword id="KW-0689">Ribosomal protein</keyword>
<keyword id="KW-0694">RNA-binding</keyword>
<keyword id="KW-0699">rRNA-binding</keyword>
<gene>
    <name evidence="1" type="primary">rplJ</name>
    <name type="ordered locus">Mmar10_1804</name>
</gene>
<feature type="chain" id="PRO_1000005530" description="Large ribosomal subunit protein uL10">
    <location>
        <begin position="1"/>
        <end position="171"/>
    </location>
</feature>
<accession>Q0ANP1</accession>
<comment type="function">
    <text evidence="1">Forms part of the ribosomal stalk, playing a central role in the interaction of the ribosome with GTP-bound translation factors.</text>
</comment>
<comment type="subunit">
    <text evidence="1">Part of the ribosomal stalk of the 50S ribosomal subunit. The N-terminus interacts with L11 and the large rRNA to form the base of the stalk. The C-terminus forms an elongated spine to which L12 dimers bind in a sequential fashion forming a multimeric L10(L12)X complex.</text>
</comment>
<comment type="similarity">
    <text evidence="1">Belongs to the universal ribosomal protein uL10 family.</text>
</comment>
<dbReference type="EMBL" id="CP000449">
    <property type="protein sequence ID" value="ABI66096.1"/>
    <property type="molecule type" value="Genomic_DNA"/>
</dbReference>
<dbReference type="RefSeq" id="WP_011643742.1">
    <property type="nucleotide sequence ID" value="NC_008347.1"/>
</dbReference>
<dbReference type="SMR" id="Q0ANP1"/>
<dbReference type="STRING" id="394221.Mmar10_1804"/>
<dbReference type="KEGG" id="mmr:Mmar10_1804"/>
<dbReference type="eggNOG" id="COG0244">
    <property type="taxonomic scope" value="Bacteria"/>
</dbReference>
<dbReference type="HOGENOM" id="CLU_092227_0_0_5"/>
<dbReference type="OrthoDB" id="9791972at2"/>
<dbReference type="Proteomes" id="UP000001964">
    <property type="component" value="Chromosome"/>
</dbReference>
<dbReference type="GO" id="GO:0015934">
    <property type="term" value="C:large ribosomal subunit"/>
    <property type="evidence" value="ECO:0007669"/>
    <property type="project" value="InterPro"/>
</dbReference>
<dbReference type="GO" id="GO:0070180">
    <property type="term" value="F:large ribosomal subunit rRNA binding"/>
    <property type="evidence" value="ECO:0007669"/>
    <property type="project" value="UniProtKB-UniRule"/>
</dbReference>
<dbReference type="GO" id="GO:0003735">
    <property type="term" value="F:structural constituent of ribosome"/>
    <property type="evidence" value="ECO:0007669"/>
    <property type="project" value="InterPro"/>
</dbReference>
<dbReference type="GO" id="GO:0006412">
    <property type="term" value="P:translation"/>
    <property type="evidence" value="ECO:0007669"/>
    <property type="project" value="UniProtKB-UniRule"/>
</dbReference>
<dbReference type="CDD" id="cd05797">
    <property type="entry name" value="Ribosomal_L10"/>
    <property type="match status" value="1"/>
</dbReference>
<dbReference type="Gene3D" id="3.30.70.1730">
    <property type="match status" value="1"/>
</dbReference>
<dbReference type="HAMAP" id="MF_00362">
    <property type="entry name" value="Ribosomal_uL10"/>
    <property type="match status" value="1"/>
</dbReference>
<dbReference type="InterPro" id="IPR001790">
    <property type="entry name" value="Ribosomal_uL10"/>
</dbReference>
<dbReference type="InterPro" id="IPR043141">
    <property type="entry name" value="Ribosomal_uL10-like_sf"/>
</dbReference>
<dbReference type="InterPro" id="IPR022973">
    <property type="entry name" value="Ribosomal_uL10_bac"/>
</dbReference>
<dbReference type="InterPro" id="IPR047865">
    <property type="entry name" value="Ribosomal_uL10_bac_type"/>
</dbReference>
<dbReference type="InterPro" id="IPR002363">
    <property type="entry name" value="Ribosomal_uL10_CS_bac"/>
</dbReference>
<dbReference type="NCBIfam" id="NF000955">
    <property type="entry name" value="PRK00099.1-1"/>
    <property type="match status" value="1"/>
</dbReference>
<dbReference type="PANTHER" id="PTHR11560">
    <property type="entry name" value="39S RIBOSOMAL PROTEIN L10, MITOCHONDRIAL"/>
    <property type="match status" value="1"/>
</dbReference>
<dbReference type="Pfam" id="PF00466">
    <property type="entry name" value="Ribosomal_L10"/>
    <property type="match status" value="1"/>
</dbReference>
<dbReference type="SUPFAM" id="SSF160369">
    <property type="entry name" value="Ribosomal protein L10-like"/>
    <property type="match status" value="1"/>
</dbReference>
<dbReference type="PROSITE" id="PS01109">
    <property type="entry name" value="RIBOSOMAL_L10"/>
    <property type="match status" value="1"/>
</dbReference>
<protein>
    <recommendedName>
        <fullName evidence="1">Large ribosomal subunit protein uL10</fullName>
    </recommendedName>
    <alternativeName>
        <fullName evidence="2">50S ribosomal protein L10</fullName>
    </alternativeName>
</protein>
<name>RL10_MARMM</name>
<sequence length="171" mass="18229">MDRIQKEASVEELNGIFSEAGSVVMAHYNGMTVAEMTELRAKLRELGGTFKVVRNRLAKIALQGKPGEGAADLFTGPVAIAYSEDFVAAPKVLVEYAKSNDKLVILGGFMEEDVFDAAGIDALSKMPSREELIATISARLMGQASQVAQRLMAPAQGLAGAIDVIREKADA</sequence>
<proteinExistence type="inferred from homology"/>
<evidence type="ECO:0000255" key="1">
    <source>
        <dbReference type="HAMAP-Rule" id="MF_00362"/>
    </source>
</evidence>
<evidence type="ECO:0000305" key="2"/>